<sequence>MKTFSESHKTVFVVDHCPYMSESCRQHVEFDMLTKNRTQGIIPLAPISKSLWTCAVEASMEYCRIMYDIFPFRKLVNFIVSDSRSRTLNSWNREDQNLQELMAALAVIGPPNPRADPECCSILHGLVEAVESLCKITDFQHESRTALMGNADWVANRGRIICITNAKSDSHVQMLEDCVNETIHEHNKMAAGSDHLMQIQKCHLVLLHTYPVGEDSLVSDRPKKELSNVLVSEVHSVKAGRHLSTKLNQLVQLHFDLASTTITNIPMKPTLSVCDQEEQHANTSANYDVELLHHKEAHVDFIKSGEGYTGSSSIRENSLKETVTLKWCTPRTNSVELHYCTGAFRISPVDVNSRPSSCLTNFLLNGRSVLLEQPRKSGSKVISHMLSSHGGEIFLHVLSSSRSILEDPPSISEGCGGRVTDYRITDFGEFMRENRLMPFPEQSYQMDGGPEVPLERAKEQLERHTRYWPMIISQTTIFNMQAVVPLASVIVKESLSEEDLLNCQKTIYNLVDMERKNDPLPISTAGTRGKGPKRDEQYRIMWNELETLVRAHVSGSERHQRVMECLMACRSKPPEEEERKKRGRKREDKEEKGEKLNKDHEHDKKGQESERIKSVLDQEKEDLAEAEVIKDSPDSPEPPNKKPHIVIEDTGPAEKSKGPMSLLSLWSSRINTANSRKHQEFVGRLNSVNNKAELYQHLKEENGGEGVENGKASRQ</sequence>
<comment type="function">
    <text evidence="1 3">Component of the integrator complex, a multiprotein complex that terminates RNA polymerase II (Pol II) transcription in the promoter-proximal region of genes (By similarity). The integrator complex provides a quality checkpoint during transcription elongation by driving premature transcription termination of transcripts that are unfavorably configured for transcriptional elongation: the complex terminates transcription by (1) catalyzing dephosphorylation of the C-terminal domain (CTD) of Pol II subunit POLR2A/RPB1 and SUPT5H/SPT5, (2) degrading the exiting nascent RNA transcript via endonuclease activity and (3) promoting the release of Pol II from bound DNA (By similarity). The integrator complex is also involved in terminating the synthesis of non-coding Pol II transcripts, such as enhancer RNAs (eRNAs), small nuclear RNAs (snRNAs), telomerase RNAs and long non-coding RNAs (lncRNAs) (By similarity). Within the integrator complex, INTS13 is part of the integrator tail module and acts as a platform for the recruitment of transcription factors at promoters (By similarity). Plays a role in gastrulation and early embryogenesis (PubMed:15737938).</text>
</comment>
<comment type="subunit">
    <text evidence="1">Component of the Integrator complex, composed of core subunits INTS1, INTS2, INTS3, INTS4, INTS5, INTS6, INTS7, INTS8, INTS9/RC74, INTS10, INTS11/CPSF3L, INTS12, INTS13, INTS14 and INTS15. The core complex associates with protein phosphatase 2A subunits PPP2CA and PPP2R1A, to form the Integrator-PP2A (INTAC) complex. INTS13 is part of the tail subcomplex, composed of INTS10, INTS13, INTS14 and INTS15.</text>
</comment>
<comment type="subcellular location">
    <subcellularLocation>
        <location evidence="1">Nucleus</location>
    </subcellularLocation>
    <subcellularLocation>
        <location evidence="1">Cytoplasm</location>
    </subcellularLocation>
    <text evidence="1">Nuclear location is required for recruitment of dynein motors to nuclear envelope at G2/M.</text>
</comment>
<comment type="domain">
    <text evidence="1">The cleavage module binding motif (CMBM) mediates recruitment of transcription factors.</text>
</comment>
<comment type="similarity">
    <text evidence="4">Belongs to the Integrator subunit 13 family.</text>
</comment>
<keyword id="KW-0131">Cell cycle</keyword>
<keyword id="KW-0132">Cell division</keyword>
<keyword id="KW-0963">Cytoplasm</keyword>
<keyword id="KW-0217">Developmental protein</keyword>
<keyword id="KW-0498">Mitosis</keyword>
<keyword id="KW-0539">Nucleus</keyword>
<keyword id="KW-1185">Reference proteome</keyword>
<feature type="chain" id="PRO_0000389514" description="Integrator complex subunit 13">
    <location>
        <begin position="1"/>
        <end position="715"/>
    </location>
</feature>
<feature type="region of interest" description="Disordered" evidence="2">
    <location>
        <begin position="572"/>
        <end position="612"/>
    </location>
</feature>
<feature type="region of interest" description="Disordered" evidence="2">
    <location>
        <begin position="626"/>
        <end position="659"/>
    </location>
</feature>
<feature type="region of interest" description="Cleavage module binding motif (CMBM)" evidence="1">
    <location>
        <begin position="658"/>
        <end position="703"/>
    </location>
</feature>
<feature type="short sequence motif" description="Nuclear localization signal (NLS)" evidence="1">
    <location>
        <begin position="581"/>
        <end position="591"/>
    </location>
</feature>
<organism>
    <name type="scientific">Xenopus laevis</name>
    <name type="common">African clawed frog</name>
    <dbReference type="NCBI Taxonomy" id="8355"/>
    <lineage>
        <taxon>Eukaryota</taxon>
        <taxon>Metazoa</taxon>
        <taxon>Chordata</taxon>
        <taxon>Craniata</taxon>
        <taxon>Vertebrata</taxon>
        <taxon>Euteleostomi</taxon>
        <taxon>Amphibia</taxon>
        <taxon>Batrachia</taxon>
        <taxon>Anura</taxon>
        <taxon>Pipoidea</taxon>
        <taxon>Pipidae</taxon>
        <taxon>Xenopodinae</taxon>
        <taxon>Xenopus</taxon>
        <taxon>Xenopus</taxon>
    </lineage>
</organism>
<reference evidence="5" key="1">
    <citation type="submission" date="2004-06" db="EMBL/GenBank/DDBJ databases">
        <authorList>
            <consortium name="NIH - Xenopus Gene Collection (XGC) project"/>
        </authorList>
    </citation>
    <scope>NUCLEOTIDE SEQUENCE [LARGE SCALE MRNA]</scope>
    <source>
        <tissue evidence="5">Brain</tissue>
    </source>
</reference>
<reference evidence="4" key="2">
    <citation type="journal article" date="2005" name="Dev. Cell">
        <title>Drosophila genome-scale screen for PAN GU kinase substrates identifies Mat89Bb as a cell cycle regulator.</title>
        <authorList>
            <person name="Lee L.A."/>
            <person name="Lee E."/>
            <person name="Anderson M.A."/>
            <person name="Vardy L."/>
            <person name="Tahinci E."/>
            <person name="Ali S.M."/>
            <person name="Kashevsky H."/>
            <person name="Benasutti M."/>
            <person name="Kirschner M.W."/>
            <person name="Orr-Weaver T.L."/>
        </authorList>
    </citation>
    <scope>IDENTIFICATION</scope>
    <scope>FUNCTION</scope>
</reference>
<gene>
    <name evidence="1" type="primary">ints13</name>
    <name evidence="1" type="synonym">asun</name>
    <name type="synonym">mat89bb</name>
    <name type="synonym">net48</name>
</gene>
<proteinExistence type="evidence at transcript level"/>
<dbReference type="EMBL" id="BC074308">
    <property type="protein sequence ID" value="AAH74308.1"/>
    <property type="molecule type" value="mRNA"/>
</dbReference>
<dbReference type="RefSeq" id="NP_001086192.1">
    <property type="nucleotide sequence ID" value="NM_001092723.1"/>
</dbReference>
<dbReference type="SMR" id="Q6GLY5"/>
<dbReference type="DNASU" id="444621"/>
<dbReference type="GeneID" id="444621"/>
<dbReference type="KEGG" id="xla:444621"/>
<dbReference type="AGR" id="Xenbase:XB-GENE-997282"/>
<dbReference type="CTD" id="444621"/>
<dbReference type="Xenbase" id="XB-GENE-997282">
    <property type="gene designation" value="ints13.S"/>
</dbReference>
<dbReference type="OrthoDB" id="5844105at2759"/>
<dbReference type="Proteomes" id="UP000186698">
    <property type="component" value="Chromosome 3S"/>
</dbReference>
<dbReference type="Bgee" id="444621">
    <property type="expression patterns" value="Expressed in oocyte and 19 other cell types or tissues"/>
</dbReference>
<dbReference type="GO" id="GO:0005737">
    <property type="term" value="C:cytoplasm"/>
    <property type="evidence" value="ECO:0000250"/>
    <property type="project" value="UniProtKB"/>
</dbReference>
<dbReference type="GO" id="GO:0160232">
    <property type="term" value="C:INTAC complex"/>
    <property type="evidence" value="ECO:0000250"/>
    <property type="project" value="UniProtKB"/>
</dbReference>
<dbReference type="GO" id="GO:0032039">
    <property type="term" value="C:integrator complex"/>
    <property type="evidence" value="ECO:0000318"/>
    <property type="project" value="GO_Central"/>
</dbReference>
<dbReference type="GO" id="GO:0005634">
    <property type="term" value="C:nucleus"/>
    <property type="evidence" value="ECO:0000250"/>
    <property type="project" value="UniProtKB"/>
</dbReference>
<dbReference type="GO" id="GO:0051301">
    <property type="term" value="P:cell division"/>
    <property type="evidence" value="ECO:0007669"/>
    <property type="project" value="UniProtKB-KW"/>
</dbReference>
<dbReference type="GO" id="GO:0051642">
    <property type="term" value="P:centrosome localization"/>
    <property type="evidence" value="ECO:0000318"/>
    <property type="project" value="GO_Central"/>
</dbReference>
<dbReference type="GO" id="GO:0030317">
    <property type="term" value="P:flagellated sperm motility"/>
    <property type="evidence" value="ECO:0000250"/>
    <property type="project" value="UniProtKB"/>
</dbReference>
<dbReference type="GO" id="GO:0080154">
    <property type="term" value="P:regulation of fertilization"/>
    <property type="evidence" value="ECO:0000250"/>
    <property type="project" value="UniProtKB"/>
</dbReference>
<dbReference type="GO" id="GO:0007346">
    <property type="term" value="P:regulation of mitotic cell cycle"/>
    <property type="evidence" value="ECO:0000315"/>
    <property type="project" value="UniProtKB"/>
</dbReference>
<dbReference type="GO" id="GO:0160240">
    <property type="term" value="P:RNA polymerase II transcription initiation surveillance"/>
    <property type="evidence" value="ECO:0000250"/>
    <property type="project" value="UniProtKB"/>
</dbReference>
<dbReference type="InterPro" id="IPR019355">
    <property type="entry name" value="Cell_cycle_regulator_Mat89Bb"/>
</dbReference>
<dbReference type="PANTHER" id="PTHR12955:SF1">
    <property type="entry name" value="INTEGRATOR COMPLEX SUBUNIT 13"/>
    <property type="match status" value="1"/>
</dbReference>
<dbReference type="PANTHER" id="PTHR12955">
    <property type="entry name" value="SARCOMA ANTIGEN NY-SAR-95-RELATED"/>
    <property type="match status" value="1"/>
</dbReference>
<dbReference type="Pfam" id="PF10221">
    <property type="entry name" value="Mat89Bb"/>
    <property type="match status" value="1"/>
</dbReference>
<accession>Q6GLY5</accession>
<name>INT13_XENLA</name>
<evidence type="ECO:0000250" key="1">
    <source>
        <dbReference type="UniProtKB" id="Q9NVM9"/>
    </source>
</evidence>
<evidence type="ECO:0000256" key="2">
    <source>
        <dbReference type="SAM" id="MobiDB-lite"/>
    </source>
</evidence>
<evidence type="ECO:0000269" key="3">
    <source>
    </source>
</evidence>
<evidence type="ECO:0000305" key="4"/>
<evidence type="ECO:0000312" key="5">
    <source>
        <dbReference type="EMBL" id="AAH74308.1"/>
    </source>
</evidence>
<protein>
    <recommendedName>
        <fullName evidence="1">Integrator complex subunit 13</fullName>
    </recommendedName>
    <alternativeName>
        <fullName evidence="1">Cell cycle regulator Mat89Bb homolog</fullName>
    </alternativeName>
    <alternativeName>
        <fullName>Germ cell tumor 1</fullName>
    </alternativeName>
    <alternativeName>
        <fullName evidence="4">Protein asunder homolog</fullName>
    </alternativeName>
    <alternativeName>
        <fullName>Sarcoma antigen NY-SAR-95</fullName>
    </alternativeName>
</protein>